<comment type="function">
    <text evidence="1">A translational regulator that binds mRNA to regulate translation initiation and/or mRNA stability. Usually binds in the 5'-UTR at or near the Shine-Dalgarno sequence preventing ribosome-binding, thus repressing translation. Its main target seems to be the major flagellin gene, while its function is anatagonized by FliW.</text>
</comment>
<comment type="subunit">
    <text evidence="1">Homodimer; the beta-strands of each monomer intercalate to form a hydrophobic core, while the alpha-helices form wings that extend away from the core.</text>
</comment>
<comment type="subcellular location">
    <subcellularLocation>
        <location evidence="1">Cytoplasm</location>
    </subcellularLocation>
</comment>
<comment type="similarity">
    <text evidence="1">Belongs to the CsrA/RsmA family.</text>
</comment>
<proteinExistence type="inferred from homology"/>
<protein>
    <recommendedName>
        <fullName evidence="1">Translational regulator CsrA</fullName>
    </recommendedName>
</protein>
<organism>
    <name type="scientific">Thermotoga neapolitana (strain ATCC 49049 / DSM 4359 / NBRC 107923 / NS-E)</name>
    <dbReference type="NCBI Taxonomy" id="309803"/>
    <lineage>
        <taxon>Bacteria</taxon>
        <taxon>Thermotogati</taxon>
        <taxon>Thermotogota</taxon>
        <taxon>Thermotogae</taxon>
        <taxon>Thermotogales</taxon>
        <taxon>Thermotogaceae</taxon>
        <taxon>Thermotoga</taxon>
    </lineage>
</organism>
<keyword id="KW-1005">Bacterial flagellum biogenesis</keyword>
<keyword id="KW-0963">Cytoplasm</keyword>
<keyword id="KW-0678">Repressor</keyword>
<keyword id="KW-0694">RNA-binding</keyword>
<keyword id="KW-0810">Translation regulation</keyword>
<evidence type="ECO:0000255" key="1">
    <source>
        <dbReference type="HAMAP-Rule" id="MF_00167"/>
    </source>
</evidence>
<accession>B9K6M8</accession>
<sequence length="83" mass="9329">MLVLTRKVGERIVIGDDIVITVLKIEGNSVKIGIEAPKHVKILREELYEELKNENVKAASVSKDDLKEVWKNDKGYKRPGPSS</sequence>
<reference key="1">
    <citation type="submission" date="2007-11" db="EMBL/GenBank/DDBJ databases">
        <title>The genome sequence of the hyperthermophilic bacterium Thermotoga neapolitana.</title>
        <authorList>
            <person name="Lim S.K."/>
            <person name="Kim J.S."/>
            <person name="Cha S.H."/>
            <person name="Park B.C."/>
            <person name="Lee D.S."/>
            <person name="Tae H.S."/>
            <person name="Kim S.-J."/>
            <person name="Kim J.J."/>
            <person name="Park K.J."/>
            <person name="Lee S.Y."/>
        </authorList>
    </citation>
    <scope>NUCLEOTIDE SEQUENCE [LARGE SCALE GENOMIC DNA]</scope>
    <source>
        <strain>ATCC 49049 / DSM 4359 / NBRC 107923 / NS-E</strain>
    </source>
</reference>
<dbReference type="EMBL" id="CP000916">
    <property type="protein sequence ID" value="ACM22611.1"/>
    <property type="molecule type" value="Genomic_DNA"/>
</dbReference>
<dbReference type="RefSeq" id="WP_015918930.1">
    <property type="nucleotide sequence ID" value="NC_011978.1"/>
</dbReference>
<dbReference type="SMR" id="B9K6M8"/>
<dbReference type="STRING" id="309803.CTN_0435"/>
<dbReference type="KEGG" id="tna:CTN_0435"/>
<dbReference type="eggNOG" id="COG1551">
    <property type="taxonomic scope" value="Bacteria"/>
</dbReference>
<dbReference type="HOGENOM" id="CLU_164837_0_0_0"/>
<dbReference type="Proteomes" id="UP000000445">
    <property type="component" value="Chromosome"/>
</dbReference>
<dbReference type="GO" id="GO:0005829">
    <property type="term" value="C:cytosol"/>
    <property type="evidence" value="ECO:0007669"/>
    <property type="project" value="TreeGrafter"/>
</dbReference>
<dbReference type="GO" id="GO:0048027">
    <property type="term" value="F:mRNA 5'-UTR binding"/>
    <property type="evidence" value="ECO:0007669"/>
    <property type="project" value="UniProtKB-UniRule"/>
</dbReference>
<dbReference type="GO" id="GO:0044781">
    <property type="term" value="P:bacterial-type flagellum organization"/>
    <property type="evidence" value="ECO:0007669"/>
    <property type="project" value="UniProtKB-KW"/>
</dbReference>
<dbReference type="GO" id="GO:0006402">
    <property type="term" value="P:mRNA catabolic process"/>
    <property type="evidence" value="ECO:0007669"/>
    <property type="project" value="InterPro"/>
</dbReference>
<dbReference type="GO" id="GO:0045947">
    <property type="term" value="P:negative regulation of translational initiation"/>
    <property type="evidence" value="ECO:0007669"/>
    <property type="project" value="UniProtKB-UniRule"/>
</dbReference>
<dbReference type="GO" id="GO:1902208">
    <property type="term" value="P:regulation of bacterial-type flagellum assembly"/>
    <property type="evidence" value="ECO:0007669"/>
    <property type="project" value="UniProtKB-UniRule"/>
</dbReference>
<dbReference type="GO" id="GO:0006109">
    <property type="term" value="P:regulation of carbohydrate metabolic process"/>
    <property type="evidence" value="ECO:0007669"/>
    <property type="project" value="InterPro"/>
</dbReference>
<dbReference type="FunFam" id="2.60.40.4380:FF:000002">
    <property type="entry name" value="Translational regulator CsrA"/>
    <property type="match status" value="1"/>
</dbReference>
<dbReference type="Gene3D" id="2.60.40.4380">
    <property type="entry name" value="Translational regulator CsrA"/>
    <property type="match status" value="1"/>
</dbReference>
<dbReference type="HAMAP" id="MF_00167">
    <property type="entry name" value="CsrA"/>
    <property type="match status" value="1"/>
</dbReference>
<dbReference type="InterPro" id="IPR003751">
    <property type="entry name" value="CsrA"/>
</dbReference>
<dbReference type="InterPro" id="IPR036107">
    <property type="entry name" value="CsrA_sf"/>
</dbReference>
<dbReference type="NCBIfam" id="TIGR00202">
    <property type="entry name" value="csrA"/>
    <property type="match status" value="1"/>
</dbReference>
<dbReference type="NCBIfam" id="NF002469">
    <property type="entry name" value="PRK01712.1"/>
    <property type="match status" value="1"/>
</dbReference>
<dbReference type="PANTHER" id="PTHR34984">
    <property type="entry name" value="CARBON STORAGE REGULATOR"/>
    <property type="match status" value="1"/>
</dbReference>
<dbReference type="PANTHER" id="PTHR34984:SF1">
    <property type="entry name" value="CARBON STORAGE REGULATOR"/>
    <property type="match status" value="1"/>
</dbReference>
<dbReference type="Pfam" id="PF02599">
    <property type="entry name" value="CsrA"/>
    <property type="match status" value="1"/>
</dbReference>
<dbReference type="SUPFAM" id="SSF117130">
    <property type="entry name" value="CsrA-like"/>
    <property type="match status" value="1"/>
</dbReference>
<feature type="chain" id="PRO_1000123633" description="Translational regulator CsrA">
    <location>
        <begin position="1"/>
        <end position="83"/>
    </location>
</feature>
<name>CSRA_THENN</name>
<gene>
    <name evidence="1" type="primary">csrA</name>
    <name type="ordered locus">CTN_0435</name>
</gene>